<dbReference type="EMBL" id="AAFW02000011">
    <property type="protein sequence ID" value="EDN64722.1"/>
    <property type="molecule type" value="Genomic_DNA"/>
</dbReference>
<dbReference type="HOGENOM" id="CLU_324433_0_0_1"/>
<dbReference type="OrthoDB" id="41995at4893"/>
<dbReference type="Proteomes" id="UP000007060">
    <property type="component" value="Unassembled WGS sequence"/>
</dbReference>
<dbReference type="GO" id="GO:0030479">
    <property type="term" value="C:actin cortical patch"/>
    <property type="evidence" value="ECO:0007669"/>
    <property type="project" value="InterPro"/>
</dbReference>
<dbReference type="GO" id="GO:0045121">
    <property type="term" value="C:membrane raft"/>
    <property type="evidence" value="ECO:0007669"/>
    <property type="project" value="UniProtKB-SubCell"/>
</dbReference>
<dbReference type="GO" id="GO:0051016">
    <property type="term" value="P:barbed-end actin filament capping"/>
    <property type="evidence" value="ECO:0007669"/>
    <property type="project" value="InterPro"/>
</dbReference>
<dbReference type="InterPro" id="IPR031370">
    <property type="entry name" value="Aim3"/>
</dbReference>
<dbReference type="Pfam" id="PF17096">
    <property type="entry name" value="AIM3"/>
    <property type="match status" value="1"/>
</dbReference>
<sequence length="944" mass="103860">MGFWENNKDSITSGLKSAGKYGYQGTKYVAKTGYKASKKHYNNSKARRERKSGKKNSSDEEYESEDEMEYERKPTDIRSLKDPKSFPPPPLKPGQKTYAGQQQQQMPNGQASYAFQGAYQGQPGAGSMEQSQYAQPQYNQYPQQQLQQGVVPQQPPIYGEQVPPYGSNSNATSYQSLPQQNQPQYAIPSQVSLNSASQQSTGFVSQNLQYGTQSSNPAPSPSFQNGLQCHQQPQYVSHGSTNLGQSQFPSGQQQQPTTQFGQQVLPSPAQPHPQPQQQQQGQPLPPPRGQVILPAPGEPLSNGFEQQQQQQQQQQQQQPLNQNNALLPQMNVEGVSGMAAVQPVYGQAMSSTTNMQDSNPSYGASPMQGQPPVGGQPPVPVRMQPQPPQPMQQGNIYPIEPSLDSTSSTPHFEVTPFDPDAPAPKPKIDIPTVDVSSLPPPPTHRDRGAVLHQEPAPSGKIQPNTTSSAASLPAKHSRTTTADNERNSGNKENDESTSKSSILGHYDVDVNIMPPPKPFRHGLDSVPSEHTRKNALERAVPILPPRNNVEPPPPPSRGNFERTELVLSTNAANVQEDPISNFLPPPKPFRHTETKQNQNSKASPVEIKDEVLPGHPSEEDRNVEPSLLPQSKPQSKSQSQFRRAHMETQPIQNFQPPPKPFRRSQSSNSSDSSYTIDGPEANHGRGRGRIAKHHDGDEYNPKSENSTENGRLGDAPNSFIRKRAPTPPAPSRSEKLHEGAITSEFDSSKDANKYEKSIPPVTSSIQAQQSTKKAPPPVVKPKPRNFSLKANEYPKELTREATGQDEVLNSITNELSHIKLRKTNVNLEKLGGAKKVKDSSPVPSDLDEKYVSASGSITPPRPPPSRSSPKKVPPVVPKKNDNLKKKPPVVPKKKPLLKSLEPRPIEMERAYSGDISAADDNLNPFERYKRNVVPQEDDRLHKLK</sequence>
<reference key="1">
    <citation type="journal article" date="2007" name="Proc. Natl. Acad. Sci. U.S.A.">
        <title>Genome sequencing and comparative analysis of Saccharomyces cerevisiae strain YJM789.</title>
        <authorList>
            <person name="Wei W."/>
            <person name="McCusker J.H."/>
            <person name="Hyman R.W."/>
            <person name="Jones T."/>
            <person name="Ning Y."/>
            <person name="Cao Z."/>
            <person name="Gu Z."/>
            <person name="Bruno D."/>
            <person name="Miranda M."/>
            <person name="Nguyen M."/>
            <person name="Wilhelmy J."/>
            <person name="Komp C."/>
            <person name="Tamse R."/>
            <person name="Wang X."/>
            <person name="Jia P."/>
            <person name="Luedi P."/>
            <person name="Oefner P.J."/>
            <person name="David L."/>
            <person name="Dietrich F.S."/>
            <person name="Li Y."/>
            <person name="Davis R.W."/>
            <person name="Steinmetz L.M."/>
        </authorList>
    </citation>
    <scope>NUCLEOTIDE SEQUENCE [LARGE SCALE GENOMIC DNA]</scope>
    <source>
        <strain>YJM789</strain>
    </source>
</reference>
<keyword id="KW-0472">Membrane</keyword>
<keyword id="KW-0597">Phosphoprotein</keyword>
<name>AIM3_YEAS7</name>
<comment type="subunit">
    <text evidence="1">Interacts with RVS167.</text>
</comment>
<comment type="subcellular location">
    <subcellularLocation>
        <location evidence="1">Membrane raft</location>
        <topology evidence="1">Peripheral membrane protein</topology>
    </subcellularLocation>
    <text evidence="1">Localizes within detergent-insoluble glycolipid-enriched membranes.</text>
</comment>
<comment type="similarity">
    <text evidence="4">Belongs to the AIM3 family.</text>
</comment>
<accession>A6ZL53</accession>
<feature type="chain" id="PRO_0000399606" description="Altered inheritance of mitochondria protein 3">
    <location>
        <begin position="1"/>
        <end position="944"/>
    </location>
</feature>
<feature type="region of interest" description="Disordered" evidence="3">
    <location>
        <begin position="1"/>
        <end position="331"/>
    </location>
</feature>
<feature type="region of interest" description="Disordered" evidence="3">
    <location>
        <begin position="349"/>
        <end position="805"/>
    </location>
</feature>
<feature type="region of interest" description="Disordered" evidence="3">
    <location>
        <begin position="821"/>
        <end position="901"/>
    </location>
</feature>
<feature type="region of interest" description="Disordered" evidence="3">
    <location>
        <begin position="916"/>
        <end position="944"/>
    </location>
</feature>
<feature type="compositionally biased region" description="Basic residues" evidence="3">
    <location>
        <begin position="36"/>
        <end position="54"/>
    </location>
</feature>
<feature type="compositionally biased region" description="Acidic residues" evidence="3">
    <location>
        <begin position="59"/>
        <end position="69"/>
    </location>
</feature>
<feature type="compositionally biased region" description="Basic and acidic residues" evidence="3">
    <location>
        <begin position="70"/>
        <end position="84"/>
    </location>
</feature>
<feature type="compositionally biased region" description="Low complexity" evidence="3">
    <location>
        <begin position="93"/>
        <end position="105"/>
    </location>
</feature>
<feature type="compositionally biased region" description="Low complexity" evidence="3">
    <location>
        <begin position="130"/>
        <end position="158"/>
    </location>
</feature>
<feature type="compositionally biased region" description="Polar residues" evidence="3">
    <location>
        <begin position="166"/>
        <end position="244"/>
    </location>
</feature>
<feature type="compositionally biased region" description="Low complexity" evidence="3">
    <location>
        <begin position="245"/>
        <end position="267"/>
    </location>
</feature>
<feature type="compositionally biased region" description="Low complexity" evidence="3">
    <location>
        <begin position="306"/>
        <end position="318"/>
    </location>
</feature>
<feature type="compositionally biased region" description="Polar residues" evidence="3">
    <location>
        <begin position="349"/>
        <end position="362"/>
    </location>
</feature>
<feature type="compositionally biased region" description="Pro residues" evidence="3">
    <location>
        <begin position="374"/>
        <end position="390"/>
    </location>
</feature>
<feature type="compositionally biased region" description="Polar residues" evidence="3">
    <location>
        <begin position="461"/>
        <end position="470"/>
    </location>
</feature>
<feature type="compositionally biased region" description="Basic and acidic residues" evidence="3">
    <location>
        <begin position="483"/>
        <end position="497"/>
    </location>
</feature>
<feature type="compositionally biased region" description="Basic and acidic residues" evidence="3">
    <location>
        <begin position="521"/>
        <end position="536"/>
    </location>
</feature>
<feature type="compositionally biased region" description="Basic and acidic residues" evidence="3">
    <location>
        <begin position="606"/>
        <end position="623"/>
    </location>
</feature>
<feature type="compositionally biased region" description="Low complexity" evidence="3">
    <location>
        <begin position="625"/>
        <end position="640"/>
    </location>
</feature>
<feature type="compositionally biased region" description="Low complexity" evidence="3">
    <location>
        <begin position="664"/>
        <end position="673"/>
    </location>
</feature>
<feature type="compositionally biased region" description="Basic and acidic residues" evidence="3">
    <location>
        <begin position="746"/>
        <end position="756"/>
    </location>
</feature>
<feature type="compositionally biased region" description="Polar residues" evidence="3">
    <location>
        <begin position="760"/>
        <end position="771"/>
    </location>
</feature>
<feature type="compositionally biased region" description="Pro residues" evidence="3">
    <location>
        <begin position="859"/>
        <end position="876"/>
    </location>
</feature>
<feature type="compositionally biased region" description="Basic residues" evidence="3">
    <location>
        <begin position="885"/>
        <end position="896"/>
    </location>
</feature>
<feature type="modified residue" description="Phosphoserine" evidence="2">
    <location>
        <position position="57"/>
    </location>
</feature>
<feature type="modified residue" description="Phosphoserine" evidence="2">
    <location>
        <position position="58"/>
    </location>
</feature>
<feature type="modified residue" description="Phosphoserine" evidence="2">
    <location>
        <position position="64"/>
    </location>
</feature>
<feature type="modified residue" description="Phosphoserine" evidence="2">
    <location>
        <position position="471"/>
    </location>
</feature>
<feature type="modified residue" description="Phosphothreonine" evidence="2">
    <location>
        <position position="726"/>
    </location>
</feature>
<feature type="modified residue" description="Phosphothreonine" evidence="2">
    <location>
        <position position="858"/>
    </location>
</feature>
<protein>
    <recommendedName>
        <fullName>Altered inheritance of mitochondria protein 3</fullName>
    </recommendedName>
</protein>
<organism>
    <name type="scientific">Saccharomyces cerevisiae (strain YJM789)</name>
    <name type="common">Baker's yeast</name>
    <dbReference type="NCBI Taxonomy" id="307796"/>
    <lineage>
        <taxon>Eukaryota</taxon>
        <taxon>Fungi</taxon>
        <taxon>Dikarya</taxon>
        <taxon>Ascomycota</taxon>
        <taxon>Saccharomycotina</taxon>
        <taxon>Saccharomycetes</taxon>
        <taxon>Saccharomycetales</taxon>
        <taxon>Saccharomycetaceae</taxon>
        <taxon>Saccharomyces</taxon>
    </lineage>
</organism>
<gene>
    <name type="primary">AIM3</name>
    <name type="ORF">SCY_0323</name>
</gene>
<evidence type="ECO:0000250" key="1"/>
<evidence type="ECO:0000250" key="2">
    <source>
        <dbReference type="UniProtKB" id="P38266"/>
    </source>
</evidence>
<evidence type="ECO:0000256" key="3">
    <source>
        <dbReference type="SAM" id="MobiDB-lite"/>
    </source>
</evidence>
<evidence type="ECO:0000305" key="4"/>
<proteinExistence type="inferred from homology"/>